<feature type="chain" id="PRO_1000139793" description="Glucosamine-6-phosphate deaminase">
    <location>
        <begin position="1"/>
        <end position="266"/>
    </location>
</feature>
<feature type="active site" description="Proton acceptor; for enolization step" evidence="1">
    <location>
        <position position="72"/>
    </location>
</feature>
<feature type="active site" description="For ring-opening step" evidence="1">
    <location>
        <position position="141"/>
    </location>
</feature>
<feature type="active site" description="Proton acceptor; for ring-opening step" evidence="1">
    <location>
        <position position="143"/>
    </location>
</feature>
<feature type="active site" description="For ring-opening step" evidence="1">
    <location>
        <position position="148"/>
    </location>
</feature>
<feature type="site" description="Part of the allosteric site" evidence="1">
    <location>
        <position position="151"/>
    </location>
</feature>
<feature type="site" description="Part of the allosteric site" evidence="1">
    <location>
        <position position="158"/>
    </location>
</feature>
<feature type="site" description="Part of the allosteric site" evidence="1">
    <location>
        <position position="160"/>
    </location>
</feature>
<feature type="site" description="Part of the allosteric site" evidence="1">
    <location>
        <position position="161"/>
    </location>
</feature>
<feature type="site" description="Part of the allosteric site" evidence="1">
    <location>
        <position position="254"/>
    </location>
</feature>
<feature type="disulfide bond" description="Interchain" evidence="1">
    <location>
        <position position="219"/>
    </location>
</feature>
<name>NAGB_SHIB3</name>
<reference key="1">
    <citation type="submission" date="2008-05" db="EMBL/GenBank/DDBJ databases">
        <title>Complete sequence of Shigella boydii serotype 18 strain BS512.</title>
        <authorList>
            <person name="Rasko D.A."/>
            <person name="Rosovitz M."/>
            <person name="Maurelli A.T."/>
            <person name="Myers G."/>
            <person name="Seshadri R."/>
            <person name="Cer R."/>
            <person name="Jiang L."/>
            <person name="Ravel J."/>
            <person name="Sebastian Y."/>
        </authorList>
    </citation>
    <scope>NUCLEOTIDE SEQUENCE [LARGE SCALE GENOMIC DNA]</scope>
    <source>
        <strain>CDC 3083-94 / BS512</strain>
    </source>
</reference>
<sequence>MRLIPLTTAEQVGKWAARHIVNRINAFKPTADRPFVLGLPTGGTPMTTYKALVEMHKAGQVSFKHVVTFNMDEYVGLPKEHPESYYSFMHRNFFDHVDIPAENINLLNGNAPDIDAECRQYEEKIRSYGKIHLFMGGVGNDGHIAFNEPASSLASRTRIKTLTHDTRVANSRFFDNDVNQVPKYALTVGVGTLLDAEEVMILVLGSQKALALQAAVEGCVNHMWTISCLQLHPKAIMVCDEPSTMELKVKTLRYFNELEAENIKGL</sequence>
<keyword id="KW-0021">Allosteric enzyme</keyword>
<keyword id="KW-0119">Carbohydrate metabolism</keyword>
<keyword id="KW-1015">Disulfide bond</keyword>
<keyword id="KW-0378">Hydrolase</keyword>
<keyword id="KW-1185">Reference proteome</keyword>
<comment type="function">
    <text evidence="1">Catalyzes the reversible isomerization-deamination of glucosamine 6-phosphate (GlcN6P) to form fructose 6-phosphate (Fru6P) and ammonium ion.</text>
</comment>
<comment type="catalytic activity">
    <reaction evidence="1">
        <text>alpha-D-glucosamine 6-phosphate + H2O = beta-D-fructose 6-phosphate + NH4(+)</text>
        <dbReference type="Rhea" id="RHEA:12172"/>
        <dbReference type="ChEBI" id="CHEBI:15377"/>
        <dbReference type="ChEBI" id="CHEBI:28938"/>
        <dbReference type="ChEBI" id="CHEBI:57634"/>
        <dbReference type="ChEBI" id="CHEBI:75989"/>
        <dbReference type="EC" id="3.5.99.6"/>
    </reaction>
</comment>
<comment type="activity regulation">
    <text evidence="1">Allosterically activated by N-acetylglucosamine 6-phosphate (GlcNAc6P).</text>
</comment>
<comment type="pathway">
    <text evidence="1">Amino-sugar metabolism; N-acetylneuraminate degradation; D-fructose 6-phosphate from N-acetylneuraminate: step 5/5.</text>
</comment>
<comment type="subunit">
    <text evidence="1">Homohexamer; trimer of disulfide-linked dimers.</text>
</comment>
<comment type="similarity">
    <text evidence="1">Belongs to the glucosamine/galactosamine-6-phosphate isomerase family. NagB subfamily.</text>
</comment>
<proteinExistence type="inferred from homology"/>
<gene>
    <name evidence="1" type="primary">nagB</name>
    <name type="ordered locus">SbBS512_E0573</name>
</gene>
<evidence type="ECO:0000255" key="1">
    <source>
        <dbReference type="HAMAP-Rule" id="MF_01241"/>
    </source>
</evidence>
<dbReference type="EC" id="3.5.99.6" evidence="1"/>
<dbReference type="EMBL" id="CP001063">
    <property type="protein sequence ID" value="ACD10440.1"/>
    <property type="molecule type" value="Genomic_DNA"/>
</dbReference>
<dbReference type="RefSeq" id="WP_001237072.1">
    <property type="nucleotide sequence ID" value="NC_010658.1"/>
</dbReference>
<dbReference type="SMR" id="B2TU53"/>
<dbReference type="STRING" id="344609.SbBS512_E0573"/>
<dbReference type="GeneID" id="93776807"/>
<dbReference type="KEGG" id="sbc:SbBS512_E0573"/>
<dbReference type="HOGENOM" id="CLU_049611_0_1_6"/>
<dbReference type="UniPathway" id="UPA00629">
    <property type="reaction ID" value="UER00684"/>
</dbReference>
<dbReference type="Proteomes" id="UP000001030">
    <property type="component" value="Chromosome"/>
</dbReference>
<dbReference type="GO" id="GO:0005829">
    <property type="term" value="C:cytosol"/>
    <property type="evidence" value="ECO:0007669"/>
    <property type="project" value="TreeGrafter"/>
</dbReference>
<dbReference type="GO" id="GO:0004342">
    <property type="term" value="F:glucosamine-6-phosphate deaminase activity"/>
    <property type="evidence" value="ECO:0007669"/>
    <property type="project" value="UniProtKB-UniRule"/>
</dbReference>
<dbReference type="GO" id="GO:0042802">
    <property type="term" value="F:identical protein binding"/>
    <property type="evidence" value="ECO:0007669"/>
    <property type="project" value="TreeGrafter"/>
</dbReference>
<dbReference type="GO" id="GO:0005975">
    <property type="term" value="P:carbohydrate metabolic process"/>
    <property type="evidence" value="ECO:0007669"/>
    <property type="project" value="InterPro"/>
</dbReference>
<dbReference type="GO" id="GO:0006043">
    <property type="term" value="P:glucosamine catabolic process"/>
    <property type="evidence" value="ECO:0007669"/>
    <property type="project" value="TreeGrafter"/>
</dbReference>
<dbReference type="GO" id="GO:0006046">
    <property type="term" value="P:N-acetylglucosamine catabolic process"/>
    <property type="evidence" value="ECO:0007669"/>
    <property type="project" value="TreeGrafter"/>
</dbReference>
<dbReference type="GO" id="GO:0019262">
    <property type="term" value="P:N-acetylneuraminate catabolic process"/>
    <property type="evidence" value="ECO:0007669"/>
    <property type="project" value="UniProtKB-UniRule"/>
</dbReference>
<dbReference type="CDD" id="cd01399">
    <property type="entry name" value="GlcN6P_deaminase"/>
    <property type="match status" value="1"/>
</dbReference>
<dbReference type="FunFam" id="3.40.50.1360:FF:000002">
    <property type="entry name" value="Glucosamine-6-phosphate deaminase"/>
    <property type="match status" value="1"/>
</dbReference>
<dbReference type="Gene3D" id="3.40.50.1360">
    <property type="match status" value="1"/>
</dbReference>
<dbReference type="HAMAP" id="MF_01241">
    <property type="entry name" value="GlcN6P_deamin"/>
    <property type="match status" value="1"/>
</dbReference>
<dbReference type="InterPro" id="IPR006148">
    <property type="entry name" value="Glc/Gal-6P_isomerase"/>
</dbReference>
<dbReference type="InterPro" id="IPR004547">
    <property type="entry name" value="Glucosamine6P_isomerase"/>
</dbReference>
<dbReference type="InterPro" id="IPR018321">
    <property type="entry name" value="Glucosamine6P_isomerase_CS"/>
</dbReference>
<dbReference type="InterPro" id="IPR037171">
    <property type="entry name" value="NagB/RpiA_transferase-like"/>
</dbReference>
<dbReference type="NCBIfam" id="TIGR00502">
    <property type="entry name" value="nagB"/>
    <property type="match status" value="1"/>
</dbReference>
<dbReference type="NCBIfam" id="NF001685">
    <property type="entry name" value="PRK00443.1-5"/>
    <property type="match status" value="1"/>
</dbReference>
<dbReference type="PANTHER" id="PTHR11280">
    <property type="entry name" value="GLUCOSAMINE-6-PHOSPHATE ISOMERASE"/>
    <property type="match status" value="1"/>
</dbReference>
<dbReference type="PANTHER" id="PTHR11280:SF5">
    <property type="entry name" value="GLUCOSAMINE-6-PHOSPHATE ISOMERASE"/>
    <property type="match status" value="1"/>
</dbReference>
<dbReference type="Pfam" id="PF01182">
    <property type="entry name" value="Glucosamine_iso"/>
    <property type="match status" value="1"/>
</dbReference>
<dbReference type="SUPFAM" id="SSF100950">
    <property type="entry name" value="NagB/RpiA/CoA transferase-like"/>
    <property type="match status" value="1"/>
</dbReference>
<dbReference type="PROSITE" id="PS01161">
    <property type="entry name" value="GLC_GALNAC_ISOMERASE"/>
    <property type="match status" value="1"/>
</dbReference>
<accession>B2TU53</accession>
<protein>
    <recommendedName>
        <fullName evidence="1">Glucosamine-6-phosphate deaminase</fullName>
        <ecNumber evidence="1">3.5.99.6</ecNumber>
    </recommendedName>
    <alternativeName>
        <fullName evidence="1">GlcN6P deaminase</fullName>
        <shortName evidence="1">GNPDA</shortName>
    </alternativeName>
    <alternativeName>
        <fullName evidence="1">Glucosamine-6-phosphate isomerase</fullName>
    </alternativeName>
</protein>
<organism>
    <name type="scientific">Shigella boydii serotype 18 (strain CDC 3083-94 / BS512)</name>
    <dbReference type="NCBI Taxonomy" id="344609"/>
    <lineage>
        <taxon>Bacteria</taxon>
        <taxon>Pseudomonadati</taxon>
        <taxon>Pseudomonadota</taxon>
        <taxon>Gammaproteobacteria</taxon>
        <taxon>Enterobacterales</taxon>
        <taxon>Enterobacteriaceae</taxon>
        <taxon>Shigella</taxon>
    </lineage>
</organism>